<gene>
    <name evidence="1" type="primary">thiM</name>
    <name type="ordered locus">ECP_2142</name>
</gene>
<comment type="function">
    <text evidence="1">Catalyzes the phosphorylation of the hydroxyl group of 4-methyl-5-beta-hydroxyethylthiazole (THZ).</text>
</comment>
<comment type="catalytic activity">
    <reaction evidence="1">
        <text>5-(2-hydroxyethyl)-4-methylthiazole + ATP = 4-methyl-5-(2-phosphooxyethyl)-thiazole + ADP + H(+)</text>
        <dbReference type="Rhea" id="RHEA:24212"/>
        <dbReference type="ChEBI" id="CHEBI:15378"/>
        <dbReference type="ChEBI" id="CHEBI:17957"/>
        <dbReference type="ChEBI" id="CHEBI:30616"/>
        <dbReference type="ChEBI" id="CHEBI:58296"/>
        <dbReference type="ChEBI" id="CHEBI:456216"/>
        <dbReference type="EC" id="2.7.1.50"/>
    </reaction>
</comment>
<comment type="cofactor">
    <cofactor evidence="1">
        <name>Mg(2+)</name>
        <dbReference type="ChEBI" id="CHEBI:18420"/>
    </cofactor>
</comment>
<comment type="pathway">
    <text evidence="1">Cofactor biosynthesis; thiamine diphosphate biosynthesis; 4-methyl-5-(2-phosphoethyl)-thiazole from 5-(2-hydroxyethyl)-4-methylthiazole: step 1/1.</text>
</comment>
<comment type="similarity">
    <text evidence="1">Belongs to the Thz kinase family.</text>
</comment>
<feature type="chain" id="PRO_1000021510" description="Hydroxyethylthiazole kinase">
    <location>
        <begin position="1"/>
        <end position="262"/>
    </location>
</feature>
<feature type="binding site" evidence="1">
    <location>
        <position position="50"/>
    </location>
    <ligand>
        <name>substrate</name>
    </ligand>
</feature>
<feature type="binding site" evidence="1">
    <location>
        <position position="125"/>
    </location>
    <ligand>
        <name>ATP</name>
        <dbReference type="ChEBI" id="CHEBI:30616"/>
    </ligand>
</feature>
<feature type="binding site" evidence="1">
    <location>
        <position position="171"/>
    </location>
    <ligand>
        <name>ATP</name>
        <dbReference type="ChEBI" id="CHEBI:30616"/>
    </ligand>
</feature>
<feature type="binding site" evidence="1">
    <location>
        <position position="198"/>
    </location>
    <ligand>
        <name>substrate</name>
    </ligand>
</feature>
<reference key="1">
    <citation type="journal article" date="2006" name="Mol. Microbiol.">
        <title>Role of pathogenicity island-associated integrases in the genome plasticity of uropathogenic Escherichia coli strain 536.</title>
        <authorList>
            <person name="Hochhut B."/>
            <person name="Wilde C."/>
            <person name="Balling G."/>
            <person name="Middendorf B."/>
            <person name="Dobrindt U."/>
            <person name="Brzuszkiewicz E."/>
            <person name="Gottschalk G."/>
            <person name="Carniel E."/>
            <person name="Hacker J."/>
        </authorList>
    </citation>
    <scope>NUCLEOTIDE SEQUENCE [LARGE SCALE GENOMIC DNA]</scope>
    <source>
        <strain>536 / UPEC</strain>
    </source>
</reference>
<organism>
    <name type="scientific">Escherichia coli O6:K15:H31 (strain 536 / UPEC)</name>
    <dbReference type="NCBI Taxonomy" id="362663"/>
    <lineage>
        <taxon>Bacteria</taxon>
        <taxon>Pseudomonadati</taxon>
        <taxon>Pseudomonadota</taxon>
        <taxon>Gammaproteobacteria</taxon>
        <taxon>Enterobacterales</taxon>
        <taxon>Enterobacteriaceae</taxon>
        <taxon>Escherichia</taxon>
    </lineage>
</organism>
<name>THIM_ECOL5</name>
<dbReference type="EC" id="2.7.1.50" evidence="1"/>
<dbReference type="EMBL" id="CP000247">
    <property type="protein sequence ID" value="ABG70141.1"/>
    <property type="molecule type" value="Genomic_DNA"/>
</dbReference>
<dbReference type="RefSeq" id="WP_001195581.1">
    <property type="nucleotide sequence ID" value="NC_008253.1"/>
</dbReference>
<dbReference type="SMR" id="Q0TFY8"/>
<dbReference type="KEGG" id="ecp:ECP_2142"/>
<dbReference type="HOGENOM" id="CLU_019943_0_1_6"/>
<dbReference type="UniPathway" id="UPA00060">
    <property type="reaction ID" value="UER00139"/>
</dbReference>
<dbReference type="Proteomes" id="UP000009182">
    <property type="component" value="Chromosome"/>
</dbReference>
<dbReference type="GO" id="GO:0005524">
    <property type="term" value="F:ATP binding"/>
    <property type="evidence" value="ECO:0007669"/>
    <property type="project" value="UniProtKB-UniRule"/>
</dbReference>
<dbReference type="GO" id="GO:0004417">
    <property type="term" value="F:hydroxyethylthiazole kinase activity"/>
    <property type="evidence" value="ECO:0007669"/>
    <property type="project" value="UniProtKB-UniRule"/>
</dbReference>
<dbReference type="GO" id="GO:0000287">
    <property type="term" value="F:magnesium ion binding"/>
    <property type="evidence" value="ECO:0007669"/>
    <property type="project" value="UniProtKB-UniRule"/>
</dbReference>
<dbReference type="GO" id="GO:0009228">
    <property type="term" value="P:thiamine biosynthetic process"/>
    <property type="evidence" value="ECO:0007669"/>
    <property type="project" value="UniProtKB-KW"/>
</dbReference>
<dbReference type="GO" id="GO:0009229">
    <property type="term" value="P:thiamine diphosphate biosynthetic process"/>
    <property type="evidence" value="ECO:0007669"/>
    <property type="project" value="UniProtKB-UniRule"/>
</dbReference>
<dbReference type="CDD" id="cd01170">
    <property type="entry name" value="THZ_kinase"/>
    <property type="match status" value="1"/>
</dbReference>
<dbReference type="FunFam" id="3.40.1190.20:FF:000015">
    <property type="entry name" value="Hydroxyethylthiazole kinase"/>
    <property type="match status" value="1"/>
</dbReference>
<dbReference type="Gene3D" id="3.40.1190.20">
    <property type="match status" value="1"/>
</dbReference>
<dbReference type="HAMAP" id="MF_00228">
    <property type="entry name" value="Thz_kinase"/>
    <property type="match status" value="1"/>
</dbReference>
<dbReference type="InterPro" id="IPR000417">
    <property type="entry name" value="Hyethyz_kinase"/>
</dbReference>
<dbReference type="InterPro" id="IPR029056">
    <property type="entry name" value="Ribokinase-like"/>
</dbReference>
<dbReference type="NCBIfam" id="NF006830">
    <property type="entry name" value="PRK09355.1"/>
    <property type="match status" value="1"/>
</dbReference>
<dbReference type="NCBIfam" id="TIGR00694">
    <property type="entry name" value="thiM"/>
    <property type="match status" value="1"/>
</dbReference>
<dbReference type="Pfam" id="PF02110">
    <property type="entry name" value="HK"/>
    <property type="match status" value="1"/>
</dbReference>
<dbReference type="PIRSF" id="PIRSF000513">
    <property type="entry name" value="Thz_kinase"/>
    <property type="match status" value="1"/>
</dbReference>
<dbReference type="PRINTS" id="PR01099">
    <property type="entry name" value="HYETHTZKNASE"/>
</dbReference>
<dbReference type="SUPFAM" id="SSF53613">
    <property type="entry name" value="Ribokinase-like"/>
    <property type="match status" value="1"/>
</dbReference>
<proteinExistence type="inferred from homology"/>
<accession>Q0TFY8</accession>
<sequence>MQVDLLSSAQSAHALHLFHQHSPLVHCMTNDVVQTFTANTLLALGASPAMVIETEEASHFAAIASALLINVGTLTQPRAQAMSAAVEQATRSQTPWTLDPVAVGALDYRRRFCVELLSHKPTAIRGNASEIMALAGVANGGRGVDTTDAAANAIPAAQTLARETGAIVVVTGEVDYVTDGRRTVGIHGGDPLMTKVVGTGCALSAVVAACCALPGDTLENIASACHWMKQAGERAVARSEGPGSFVPHFLDALWQLTQEVQA</sequence>
<protein>
    <recommendedName>
        <fullName evidence="1">Hydroxyethylthiazole kinase</fullName>
        <ecNumber evidence="1">2.7.1.50</ecNumber>
    </recommendedName>
    <alternativeName>
        <fullName evidence="1">4-methyl-5-beta-hydroxyethylthiazole kinase</fullName>
        <shortName evidence="1">TH kinase</shortName>
        <shortName evidence="1">Thz kinase</shortName>
    </alternativeName>
</protein>
<evidence type="ECO:0000255" key="1">
    <source>
        <dbReference type="HAMAP-Rule" id="MF_00228"/>
    </source>
</evidence>
<keyword id="KW-0067">ATP-binding</keyword>
<keyword id="KW-0418">Kinase</keyword>
<keyword id="KW-0460">Magnesium</keyword>
<keyword id="KW-0479">Metal-binding</keyword>
<keyword id="KW-0547">Nucleotide-binding</keyword>
<keyword id="KW-0784">Thiamine biosynthesis</keyword>
<keyword id="KW-0808">Transferase</keyword>